<gene>
    <name evidence="1" type="primary">trpA</name>
    <name type="ordered locus">Nwi_0054</name>
</gene>
<comment type="function">
    <text evidence="1">The alpha subunit is responsible for the aldol cleavage of indoleglycerol phosphate to indole and glyceraldehyde 3-phosphate.</text>
</comment>
<comment type="catalytic activity">
    <reaction evidence="1">
        <text>(1S,2R)-1-C-(indol-3-yl)glycerol 3-phosphate + L-serine = D-glyceraldehyde 3-phosphate + L-tryptophan + H2O</text>
        <dbReference type="Rhea" id="RHEA:10532"/>
        <dbReference type="ChEBI" id="CHEBI:15377"/>
        <dbReference type="ChEBI" id="CHEBI:33384"/>
        <dbReference type="ChEBI" id="CHEBI:57912"/>
        <dbReference type="ChEBI" id="CHEBI:58866"/>
        <dbReference type="ChEBI" id="CHEBI:59776"/>
        <dbReference type="EC" id="4.2.1.20"/>
    </reaction>
</comment>
<comment type="pathway">
    <text evidence="1">Amino-acid biosynthesis; L-tryptophan biosynthesis; L-tryptophan from chorismate: step 5/5.</text>
</comment>
<comment type="subunit">
    <text evidence="1">Tetramer of two alpha and two beta chains.</text>
</comment>
<comment type="similarity">
    <text evidence="1">Belongs to the TrpA family.</text>
</comment>
<reference key="1">
    <citation type="journal article" date="2006" name="Appl. Environ. Microbiol.">
        <title>Genome sequence of the chemolithoautotrophic nitrite-oxidizing bacterium Nitrobacter winogradskyi Nb-255.</title>
        <authorList>
            <person name="Starkenburg S.R."/>
            <person name="Chain P.S.G."/>
            <person name="Sayavedra-Soto L.A."/>
            <person name="Hauser L."/>
            <person name="Land M.L."/>
            <person name="Larimer F.W."/>
            <person name="Malfatti S.A."/>
            <person name="Klotz M.G."/>
            <person name="Bottomley P.J."/>
            <person name="Arp D.J."/>
            <person name="Hickey W.J."/>
        </authorList>
    </citation>
    <scope>NUCLEOTIDE SEQUENCE [LARGE SCALE GENOMIC DNA]</scope>
    <source>
        <strain>ATCC 25391 / DSM 10237 / CIP 104748 / NCIMB 11846 / Nb-255</strain>
    </source>
</reference>
<protein>
    <recommendedName>
        <fullName evidence="1">Tryptophan synthase alpha chain</fullName>
        <ecNumber evidence="1">4.2.1.20</ecNumber>
    </recommendedName>
</protein>
<proteinExistence type="inferred from homology"/>
<dbReference type="EC" id="4.2.1.20" evidence="1"/>
<dbReference type="EMBL" id="CP000115">
    <property type="protein sequence ID" value="ABA03322.1"/>
    <property type="molecule type" value="Genomic_DNA"/>
</dbReference>
<dbReference type="RefSeq" id="WP_011313393.1">
    <property type="nucleotide sequence ID" value="NC_007406.1"/>
</dbReference>
<dbReference type="SMR" id="Q3SWL9"/>
<dbReference type="STRING" id="323098.Nwi_0054"/>
<dbReference type="KEGG" id="nwi:Nwi_0054"/>
<dbReference type="eggNOG" id="COG0159">
    <property type="taxonomic scope" value="Bacteria"/>
</dbReference>
<dbReference type="HOGENOM" id="CLU_016734_0_0_5"/>
<dbReference type="OrthoDB" id="9804578at2"/>
<dbReference type="UniPathway" id="UPA00035">
    <property type="reaction ID" value="UER00044"/>
</dbReference>
<dbReference type="Proteomes" id="UP000002531">
    <property type="component" value="Chromosome"/>
</dbReference>
<dbReference type="GO" id="GO:0005829">
    <property type="term" value="C:cytosol"/>
    <property type="evidence" value="ECO:0007669"/>
    <property type="project" value="TreeGrafter"/>
</dbReference>
<dbReference type="GO" id="GO:0004834">
    <property type="term" value="F:tryptophan synthase activity"/>
    <property type="evidence" value="ECO:0007669"/>
    <property type="project" value="UniProtKB-UniRule"/>
</dbReference>
<dbReference type="CDD" id="cd04724">
    <property type="entry name" value="Tryptophan_synthase_alpha"/>
    <property type="match status" value="1"/>
</dbReference>
<dbReference type="FunFam" id="3.20.20.70:FF:000037">
    <property type="entry name" value="Tryptophan synthase alpha chain"/>
    <property type="match status" value="1"/>
</dbReference>
<dbReference type="Gene3D" id="3.20.20.70">
    <property type="entry name" value="Aldolase class I"/>
    <property type="match status" value="1"/>
</dbReference>
<dbReference type="HAMAP" id="MF_00131">
    <property type="entry name" value="Trp_synth_alpha"/>
    <property type="match status" value="1"/>
</dbReference>
<dbReference type="InterPro" id="IPR013785">
    <property type="entry name" value="Aldolase_TIM"/>
</dbReference>
<dbReference type="InterPro" id="IPR011060">
    <property type="entry name" value="RibuloseP-bd_barrel"/>
</dbReference>
<dbReference type="InterPro" id="IPR018204">
    <property type="entry name" value="Trp_synthase_alpha_AS"/>
</dbReference>
<dbReference type="InterPro" id="IPR002028">
    <property type="entry name" value="Trp_synthase_suA"/>
</dbReference>
<dbReference type="NCBIfam" id="TIGR00262">
    <property type="entry name" value="trpA"/>
    <property type="match status" value="1"/>
</dbReference>
<dbReference type="PANTHER" id="PTHR43406:SF1">
    <property type="entry name" value="TRYPTOPHAN SYNTHASE ALPHA CHAIN, CHLOROPLASTIC"/>
    <property type="match status" value="1"/>
</dbReference>
<dbReference type="PANTHER" id="PTHR43406">
    <property type="entry name" value="TRYPTOPHAN SYNTHASE, ALPHA CHAIN"/>
    <property type="match status" value="1"/>
</dbReference>
<dbReference type="Pfam" id="PF00290">
    <property type="entry name" value="Trp_syntA"/>
    <property type="match status" value="1"/>
</dbReference>
<dbReference type="SUPFAM" id="SSF51366">
    <property type="entry name" value="Ribulose-phoshate binding barrel"/>
    <property type="match status" value="1"/>
</dbReference>
<dbReference type="PROSITE" id="PS00167">
    <property type="entry name" value="TRP_SYNTHASE_ALPHA"/>
    <property type="match status" value="1"/>
</dbReference>
<accession>Q3SWL9</accession>
<feature type="chain" id="PRO_1000018240" description="Tryptophan synthase alpha chain">
    <location>
        <begin position="1"/>
        <end position="278"/>
    </location>
</feature>
<feature type="active site" description="Proton acceptor" evidence="1">
    <location>
        <position position="50"/>
    </location>
</feature>
<feature type="active site" description="Proton acceptor" evidence="1">
    <location>
        <position position="61"/>
    </location>
</feature>
<sequence>MTTRIDTRFAELRKQGRSAFVTFLMAGDPDPATSLAIIKALPRAGADIIEIGMPFTDPMADGPAVQAAGRRALDAGMTLTGTLRMIGEFRKDDDSTPVVLMGYYNPVYIYGVEKFLDDARAAGVDGLIVVDLPPEEDSELCIPAMKAGLNFIRLATPTTDDKRLPAVLANTSGFVYYVSITGITGSAAADSTAVGAAVGRIKRHTSLPVCVGFGIRTPDAARGIAERSDGAVVGSALVDALSASLDAEGKATSGTVQAVASLAAALAEGVRSARQAAE</sequence>
<organism>
    <name type="scientific">Nitrobacter winogradskyi (strain ATCC 25391 / DSM 10237 / CIP 104748 / NCIMB 11846 / Nb-255)</name>
    <dbReference type="NCBI Taxonomy" id="323098"/>
    <lineage>
        <taxon>Bacteria</taxon>
        <taxon>Pseudomonadati</taxon>
        <taxon>Pseudomonadota</taxon>
        <taxon>Alphaproteobacteria</taxon>
        <taxon>Hyphomicrobiales</taxon>
        <taxon>Nitrobacteraceae</taxon>
        <taxon>Nitrobacter</taxon>
    </lineage>
</organism>
<keyword id="KW-0028">Amino-acid biosynthesis</keyword>
<keyword id="KW-0057">Aromatic amino acid biosynthesis</keyword>
<keyword id="KW-0456">Lyase</keyword>
<keyword id="KW-1185">Reference proteome</keyword>
<keyword id="KW-0822">Tryptophan biosynthesis</keyword>
<evidence type="ECO:0000255" key="1">
    <source>
        <dbReference type="HAMAP-Rule" id="MF_00131"/>
    </source>
</evidence>
<name>TRPA_NITWN</name>